<proteinExistence type="inferred from homology"/>
<comment type="function">
    <text evidence="1">Necessary for the introduction of cis unsaturation into fatty acids. Catalyzes the dehydration of (3R)-3-hydroxydecanoyl-ACP to E-(2)-decenoyl-ACP and then its isomerization to Z-(3)-decenoyl-ACP. Can catalyze the dehydratase reaction for beta-hydroxyacyl-ACPs with saturated chain lengths up to 16:0, being most active on intermediate chain length.</text>
</comment>
<comment type="catalytic activity">
    <reaction evidence="1">
        <text>a (3R)-hydroxyacyl-[ACP] = a (2E)-enoyl-[ACP] + H2O</text>
        <dbReference type="Rhea" id="RHEA:13097"/>
        <dbReference type="Rhea" id="RHEA-COMP:9925"/>
        <dbReference type="Rhea" id="RHEA-COMP:9945"/>
        <dbReference type="ChEBI" id="CHEBI:15377"/>
        <dbReference type="ChEBI" id="CHEBI:78784"/>
        <dbReference type="ChEBI" id="CHEBI:78827"/>
        <dbReference type="EC" id="4.2.1.59"/>
    </reaction>
</comment>
<comment type="catalytic activity">
    <reaction evidence="1">
        <text>(3R)-hydroxydecanoyl-[ACP] = (2E)-decenoyl-[ACP] + H2O</text>
        <dbReference type="Rhea" id="RHEA:41860"/>
        <dbReference type="Rhea" id="RHEA-COMP:9638"/>
        <dbReference type="Rhea" id="RHEA-COMP:9639"/>
        <dbReference type="ChEBI" id="CHEBI:15377"/>
        <dbReference type="ChEBI" id="CHEBI:78466"/>
        <dbReference type="ChEBI" id="CHEBI:78467"/>
    </reaction>
</comment>
<comment type="catalytic activity">
    <reaction evidence="1">
        <text>(2E)-decenoyl-[ACP] = (3Z)-decenoyl-[ACP]</text>
        <dbReference type="Rhea" id="RHEA:23568"/>
        <dbReference type="Rhea" id="RHEA-COMP:9639"/>
        <dbReference type="Rhea" id="RHEA-COMP:9927"/>
        <dbReference type="ChEBI" id="CHEBI:78467"/>
        <dbReference type="ChEBI" id="CHEBI:78798"/>
        <dbReference type="EC" id="5.3.3.14"/>
    </reaction>
</comment>
<comment type="pathway">
    <text evidence="1">Lipid metabolism; fatty acid biosynthesis.</text>
</comment>
<comment type="subunit">
    <text evidence="1">Homodimer.</text>
</comment>
<comment type="subcellular location">
    <subcellularLocation>
        <location evidence="1">Cytoplasm</location>
    </subcellularLocation>
</comment>
<comment type="similarity">
    <text evidence="1">Belongs to the thioester dehydratase family. FabA subfamily.</text>
</comment>
<name>FABA_SHESW</name>
<evidence type="ECO:0000255" key="1">
    <source>
        <dbReference type="HAMAP-Rule" id="MF_00405"/>
    </source>
</evidence>
<protein>
    <recommendedName>
        <fullName evidence="1">3-hydroxydecanoyl-[acyl-carrier-protein] dehydratase</fullName>
        <ecNumber evidence="1">4.2.1.59</ecNumber>
    </recommendedName>
    <alternativeName>
        <fullName evidence="1">3-hydroxyacyl-[acyl-carrier-protein] dehydratase FabA</fullName>
    </alternativeName>
    <alternativeName>
        <fullName evidence="1">Beta-hydroxydecanoyl thioester dehydrase</fullName>
    </alternativeName>
    <alternativeName>
        <fullName evidence="1">Trans-2-decenoyl-[acyl-carrier-protein] isomerase</fullName>
        <ecNumber evidence="1">5.3.3.14</ecNumber>
    </alternativeName>
</protein>
<accession>A1RKL7</accession>
<feature type="chain" id="PRO_1000201219" description="3-hydroxydecanoyl-[acyl-carrier-protein] dehydratase">
    <location>
        <begin position="1"/>
        <end position="171"/>
    </location>
</feature>
<feature type="active site" evidence="1">
    <location>
        <position position="70"/>
    </location>
</feature>
<dbReference type="EC" id="4.2.1.59" evidence="1"/>
<dbReference type="EC" id="5.3.3.14" evidence="1"/>
<dbReference type="EMBL" id="CP000503">
    <property type="protein sequence ID" value="ABM25212.1"/>
    <property type="molecule type" value="Genomic_DNA"/>
</dbReference>
<dbReference type="RefSeq" id="WP_011789677.1">
    <property type="nucleotide sequence ID" value="NC_008750.1"/>
</dbReference>
<dbReference type="SMR" id="A1RKL7"/>
<dbReference type="GeneID" id="67443166"/>
<dbReference type="KEGG" id="shw:Sputw3181_2388"/>
<dbReference type="HOGENOM" id="CLU_097925_0_0_6"/>
<dbReference type="UniPathway" id="UPA00094"/>
<dbReference type="Proteomes" id="UP000002597">
    <property type="component" value="Chromosome"/>
</dbReference>
<dbReference type="GO" id="GO:0005737">
    <property type="term" value="C:cytoplasm"/>
    <property type="evidence" value="ECO:0007669"/>
    <property type="project" value="UniProtKB-SubCell"/>
</dbReference>
<dbReference type="GO" id="GO:0019171">
    <property type="term" value="F:(3R)-hydroxyacyl-[acyl-carrier-protein] dehydratase activity"/>
    <property type="evidence" value="ECO:0007669"/>
    <property type="project" value="UniProtKB-UniRule"/>
</dbReference>
<dbReference type="GO" id="GO:0034017">
    <property type="term" value="F:trans-2-decenoyl-acyl-carrier-protein isomerase activity"/>
    <property type="evidence" value="ECO:0007669"/>
    <property type="project" value="UniProtKB-UniRule"/>
</dbReference>
<dbReference type="GO" id="GO:0006636">
    <property type="term" value="P:unsaturated fatty acid biosynthetic process"/>
    <property type="evidence" value="ECO:0007669"/>
    <property type="project" value="UniProtKB-UniRule"/>
</dbReference>
<dbReference type="CDD" id="cd01287">
    <property type="entry name" value="FabA"/>
    <property type="match status" value="1"/>
</dbReference>
<dbReference type="Gene3D" id="3.10.129.10">
    <property type="entry name" value="Hotdog Thioesterase"/>
    <property type="match status" value="1"/>
</dbReference>
<dbReference type="HAMAP" id="MF_00405">
    <property type="entry name" value="FabA"/>
    <property type="match status" value="1"/>
</dbReference>
<dbReference type="InterPro" id="IPR010083">
    <property type="entry name" value="FabA"/>
</dbReference>
<dbReference type="InterPro" id="IPR013114">
    <property type="entry name" value="FabA_FabZ"/>
</dbReference>
<dbReference type="InterPro" id="IPR029069">
    <property type="entry name" value="HotDog_dom_sf"/>
</dbReference>
<dbReference type="NCBIfam" id="TIGR01749">
    <property type="entry name" value="fabA"/>
    <property type="match status" value="1"/>
</dbReference>
<dbReference type="NCBIfam" id="NF003509">
    <property type="entry name" value="PRK05174.1"/>
    <property type="match status" value="1"/>
</dbReference>
<dbReference type="PANTHER" id="PTHR30272">
    <property type="entry name" value="3-HYDROXYACYL-[ACYL-CARRIER-PROTEIN] DEHYDRATASE"/>
    <property type="match status" value="1"/>
</dbReference>
<dbReference type="PANTHER" id="PTHR30272:SF8">
    <property type="entry name" value="3-HYDROXYDECANOYL-[ACYL-CARRIER-PROTEIN] DEHYDRATASE"/>
    <property type="match status" value="1"/>
</dbReference>
<dbReference type="Pfam" id="PF07977">
    <property type="entry name" value="FabA"/>
    <property type="match status" value="1"/>
</dbReference>
<dbReference type="SUPFAM" id="SSF54637">
    <property type="entry name" value="Thioesterase/thiol ester dehydrase-isomerase"/>
    <property type="match status" value="1"/>
</dbReference>
<organism>
    <name type="scientific">Shewanella sp. (strain W3-18-1)</name>
    <dbReference type="NCBI Taxonomy" id="351745"/>
    <lineage>
        <taxon>Bacteria</taxon>
        <taxon>Pseudomonadati</taxon>
        <taxon>Pseudomonadota</taxon>
        <taxon>Gammaproteobacteria</taxon>
        <taxon>Alteromonadales</taxon>
        <taxon>Shewanellaceae</taxon>
        <taxon>Shewanella</taxon>
    </lineage>
</organism>
<sequence length="171" mass="18766">MNKANSFNKEELIACGHGKLFGPNSPRLPVDNMLMIDRIVTINDNGGEFGKGEIVAELDINPELWFFDCHFISDPVMPGCLGLDAMWQLVGFYLGWEGAEGKGRALGVGEVKFTGQVLPGAKKVTYKLNIKRTIHRKLVMGIADAILEVDGRQIYSATDLKVGVFSDTSTF</sequence>
<gene>
    <name evidence="1" type="primary">fabA</name>
    <name type="ordered locus">Sputw3181_2388</name>
</gene>
<keyword id="KW-0963">Cytoplasm</keyword>
<keyword id="KW-0275">Fatty acid biosynthesis</keyword>
<keyword id="KW-0276">Fatty acid metabolism</keyword>
<keyword id="KW-0413">Isomerase</keyword>
<keyword id="KW-0444">Lipid biosynthesis</keyword>
<keyword id="KW-0443">Lipid metabolism</keyword>
<keyword id="KW-0456">Lyase</keyword>
<reference key="1">
    <citation type="submission" date="2006-12" db="EMBL/GenBank/DDBJ databases">
        <title>Complete sequence of Shewanella sp. W3-18-1.</title>
        <authorList>
            <consortium name="US DOE Joint Genome Institute"/>
            <person name="Copeland A."/>
            <person name="Lucas S."/>
            <person name="Lapidus A."/>
            <person name="Barry K."/>
            <person name="Detter J.C."/>
            <person name="Glavina del Rio T."/>
            <person name="Hammon N."/>
            <person name="Israni S."/>
            <person name="Dalin E."/>
            <person name="Tice H."/>
            <person name="Pitluck S."/>
            <person name="Chain P."/>
            <person name="Malfatti S."/>
            <person name="Shin M."/>
            <person name="Vergez L."/>
            <person name="Schmutz J."/>
            <person name="Larimer F."/>
            <person name="Land M."/>
            <person name="Hauser L."/>
            <person name="Kyrpides N."/>
            <person name="Lykidis A."/>
            <person name="Tiedje J."/>
            <person name="Richardson P."/>
        </authorList>
    </citation>
    <scope>NUCLEOTIDE SEQUENCE [LARGE SCALE GENOMIC DNA]</scope>
    <source>
        <strain>W3-18-1</strain>
    </source>
</reference>